<organism>
    <name type="scientific">African swine fever virus (isolate Tick/South Africa/Pretoriuskop Pr4/1996)</name>
    <name type="common">ASFV</name>
    <dbReference type="NCBI Taxonomy" id="561443"/>
    <lineage>
        <taxon>Viruses</taxon>
        <taxon>Varidnaviria</taxon>
        <taxon>Bamfordvirae</taxon>
        <taxon>Nucleocytoviricota</taxon>
        <taxon>Pokkesviricetes</taxon>
        <taxon>Asfuvirales</taxon>
        <taxon>Asfarviridae</taxon>
        <taxon>Asfivirus</taxon>
        <taxon>African swine fever virus</taxon>
    </lineage>
</organism>
<comment type="function">
    <text evidence="1">Trans-prenyltransferase that catalyzes the sequential condensation of isopentenyl diphosphate (IPP) with different allylic diphosphates, such as dimethylallyl diphosphate (DMAPP), geranyl diphosphate (GPP), farnesyl diphosphate (FPP) and geranylgeranyl diphosphate (GGPP), farnesyl diphosphate being the best allylic substrate.</text>
</comment>
<comment type="catalytic activity">
    <reaction>
        <text>isopentenyl diphosphate + dimethylallyl diphosphate = (2E)-geranyl diphosphate + diphosphate</text>
        <dbReference type="Rhea" id="RHEA:22408"/>
        <dbReference type="ChEBI" id="CHEBI:33019"/>
        <dbReference type="ChEBI" id="CHEBI:57623"/>
        <dbReference type="ChEBI" id="CHEBI:58057"/>
        <dbReference type="ChEBI" id="CHEBI:128769"/>
        <dbReference type="EC" id="2.5.1.1"/>
    </reaction>
</comment>
<comment type="catalytic activity">
    <reaction>
        <text>isopentenyl diphosphate + (2E)-geranyl diphosphate = (2E,6E)-farnesyl diphosphate + diphosphate</text>
        <dbReference type="Rhea" id="RHEA:19361"/>
        <dbReference type="ChEBI" id="CHEBI:33019"/>
        <dbReference type="ChEBI" id="CHEBI:58057"/>
        <dbReference type="ChEBI" id="CHEBI:128769"/>
        <dbReference type="ChEBI" id="CHEBI:175763"/>
        <dbReference type="EC" id="2.5.1.10"/>
    </reaction>
</comment>
<comment type="catalytic activity">
    <reaction>
        <text>isopentenyl diphosphate + (2E,6E)-farnesyl diphosphate = (2E,6E,10E)-geranylgeranyl diphosphate + diphosphate</text>
        <dbReference type="Rhea" id="RHEA:17653"/>
        <dbReference type="ChEBI" id="CHEBI:33019"/>
        <dbReference type="ChEBI" id="CHEBI:58756"/>
        <dbReference type="ChEBI" id="CHEBI:128769"/>
        <dbReference type="ChEBI" id="CHEBI:175763"/>
        <dbReference type="EC" id="2.5.1.29"/>
    </reaction>
</comment>
<comment type="catalytic activity">
    <reaction>
        <text>isopentenyl diphosphate + (2E,6E,10E)-geranylgeranyl diphosphate = (2E,6E,10E,14E)-geranylfarnesyl diphosphate + diphosphate</text>
        <dbReference type="Rhea" id="RHEA:25694"/>
        <dbReference type="ChEBI" id="CHEBI:33019"/>
        <dbReference type="ChEBI" id="CHEBI:57907"/>
        <dbReference type="ChEBI" id="CHEBI:58756"/>
        <dbReference type="ChEBI" id="CHEBI:128769"/>
    </reaction>
</comment>
<comment type="cofactor">
    <cofactor evidence="1">
        <name>Mg(2+)</name>
        <dbReference type="ChEBI" id="CHEBI:18420"/>
    </cofactor>
    <text evidence="1">Binds 2 Mg(2+) ions per subunit.</text>
</comment>
<comment type="pathway">
    <text>Isoprenoid biosynthesis; farnesyl diphosphate biosynthesis; farnesyl diphosphate from geranyl diphosphate and isopentenyl diphosphate: step 1/1.</text>
</comment>
<comment type="pathway">
    <text>Isoprenoid biosynthesis; geranyl diphosphate biosynthesis; geranyl diphosphate from dimethylallyl diphosphate and isopentenyl diphosphate: step 1/1.</text>
</comment>
<comment type="pathway">
    <text>Isoprenoid biosynthesis; geranylgeranyl diphosphate biosynthesis; geranylgeranyl diphosphate from farnesyl diphosphate and isopentenyl diphosphate: step 1/1.</text>
</comment>
<comment type="subcellular location">
    <subcellularLocation>
        <location>Host endoplasmic reticulum</location>
    </subcellularLocation>
    <subcellularLocation>
        <location evidence="1">Host membrane</location>
        <topology evidence="1">Single-pass membrane protein</topology>
    </subcellularLocation>
</comment>
<comment type="induction">
    <text evidence="5">Expressed in the late phase of the viral replicative cycle.</text>
</comment>
<comment type="similarity">
    <text evidence="5">Belongs to the FPP/GGPP synthase family. Asfivirus trans-prenyltransferase subfamily.</text>
</comment>
<accession>P0C9E0</accession>
<proteinExistence type="inferred from homology"/>
<reference key="1">
    <citation type="submission" date="2003-03" db="EMBL/GenBank/DDBJ databases">
        <title>African swine fever virus genomes.</title>
        <authorList>
            <person name="Kutish G.F."/>
            <person name="Rock D.L."/>
        </authorList>
    </citation>
    <scope>NUCLEOTIDE SEQUENCE [LARGE SCALE GENOMIC DNA]</scope>
</reference>
<protein>
    <recommendedName>
        <fullName>Trans-prenyltransferase</fullName>
        <ecNumber>2.5.1.-</ecNumber>
    </recommendedName>
    <alternativeName>
        <fullName>(2E,6E)-farnesyl diphosphate synthase</fullName>
    </alternativeName>
    <alternativeName>
        <fullName>Dimethylallyltranstransferase</fullName>
        <ecNumber>2.5.1.1</ecNumber>
    </alternativeName>
    <alternativeName>
        <fullName>Farnesyl diphosphate synthase</fullName>
    </alternativeName>
    <alternativeName>
        <fullName>Farnesyltranstransferase</fullName>
        <ecNumber>2.5.1.29</ecNumber>
    </alternativeName>
    <alternativeName>
        <fullName>Geranyltranstransferase</fullName>
        <ecNumber>2.5.1.10</ecNumber>
    </alternativeName>
    <alternativeName>
        <fullName>Polyprenyl-diphosphate synthase</fullName>
    </alternativeName>
</protein>
<gene>
    <name type="ordered locus">Pret-086</name>
</gene>
<dbReference type="EC" id="2.5.1.-"/>
<dbReference type="EC" id="2.5.1.1"/>
<dbReference type="EC" id="2.5.1.29"/>
<dbReference type="EC" id="2.5.1.10"/>
<dbReference type="EMBL" id="AY261363">
    <property type="status" value="NOT_ANNOTATED_CDS"/>
    <property type="molecule type" value="Genomic_DNA"/>
</dbReference>
<dbReference type="SMR" id="P0C9E0"/>
<dbReference type="UniPathway" id="UPA00259">
    <property type="reaction ID" value="UER00368"/>
</dbReference>
<dbReference type="UniPathway" id="UPA00260">
    <property type="reaction ID" value="UER00369"/>
</dbReference>
<dbReference type="UniPathway" id="UPA00389">
    <property type="reaction ID" value="UER00564"/>
</dbReference>
<dbReference type="Proteomes" id="UP000000859">
    <property type="component" value="Segment"/>
</dbReference>
<dbReference type="GO" id="GO:0044165">
    <property type="term" value="C:host cell endoplasmic reticulum"/>
    <property type="evidence" value="ECO:0007669"/>
    <property type="project" value="UniProtKB-SubCell"/>
</dbReference>
<dbReference type="GO" id="GO:0033644">
    <property type="term" value="C:host cell membrane"/>
    <property type="evidence" value="ECO:0007669"/>
    <property type="project" value="UniProtKB-SubCell"/>
</dbReference>
<dbReference type="GO" id="GO:0016020">
    <property type="term" value="C:membrane"/>
    <property type="evidence" value="ECO:0007669"/>
    <property type="project" value="UniProtKB-KW"/>
</dbReference>
<dbReference type="GO" id="GO:0004337">
    <property type="term" value="F:(2E,6E)-farnesyl diphosphate synthase activity"/>
    <property type="evidence" value="ECO:0007669"/>
    <property type="project" value="UniProtKB-EC"/>
</dbReference>
<dbReference type="GO" id="GO:0004161">
    <property type="term" value="F:dimethylallyltranstransferase activity"/>
    <property type="evidence" value="ECO:0007669"/>
    <property type="project" value="UniProtKB-EC"/>
</dbReference>
<dbReference type="GO" id="GO:0044687">
    <property type="term" value="F:geranylfarnesyl diphosphate synthase activity"/>
    <property type="evidence" value="ECO:0007669"/>
    <property type="project" value="RHEA"/>
</dbReference>
<dbReference type="GO" id="GO:0004311">
    <property type="term" value="F:geranylgeranyl diphosphate synthase activity"/>
    <property type="evidence" value="ECO:0007669"/>
    <property type="project" value="UniProtKB-EC"/>
</dbReference>
<dbReference type="GO" id="GO:0046872">
    <property type="term" value="F:metal ion binding"/>
    <property type="evidence" value="ECO:0007669"/>
    <property type="project" value="UniProtKB-KW"/>
</dbReference>
<dbReference type="GO" id="GO:0045337">
    <property type="term" value="P:farnesyl diphosphate biosynthetic process"/>
    <property type="evidence" value="ECO:0007669"/>
    <property type="project" value="UniProtKB-UniPathway"/>
</dbReference>
<dbReference type="GO" id="GO:0033384">
    <property type="term" value="P:geranyl diphosphate biosynthetic process"/>
    <property type="evidence" value="ECO:0007669"/>
    <property type="project" value="UniProtKB-UniPathway"/>
</dbReference>
<dbReference type="GO" id="GO:0033386">
    <property type="term" value="P:geranylgeranyl diphosphate biosynthetic process"/>
    <property type="evidence" value="ECO:0007669"/>
    <property type="project" value="UniProtKB-UniPathway"/>
</dbReference>
<dbReference type="Gene3D" id="1.10.600.10">
    <property type="entry name" value="Farnesyl Diphosphate Synthase"/>
    <property type="match status" value="1"/>
</dbReference>
<dbReference type="InterPro" id="IPR008949">
    <property type="entry name" value="Isoprenoid_synthase_dom_sf"/>
</dbReference>
<dbReference type="InterPro" id="IPR000092">
    <property type="entry name" value="Polyprenyl_synt"/>
</dbReference>
<dbReference type="PANTHER" id="PTHR43281">
    <property type="entry name" value="FARNESYL DIPHOSPHATE SYNTHASE"/>
    <property type="match status" value="1"/>
</dbReference>
<dbReference type="PANTHER" id="PTHR43281:SF1">
    <property type="entry name" value="FARNESYL DIPHOSPHATE SYNTHASE"/>
    <property type="match status" value="1"/>
</dbReference>
<dbReference type="Pfam" id="PF00348">
    <property type="entry name" value="polyprenyl_synt"/>
    <property type="match status" value="1"/>
</dbReference>
<dbReference type="SUPFAM" id="SSF48576">
    <property type="entry name" value="Terpenoid synthases"/>
    <property type="match status" value="1"/>
</dbReference>
<dbReference type="PROSITE" id="PS00444">
    <property type="entry name" value="POLYPRENYL_SYNTHASE_2"/>
    <property type="match status" value="1"/>
</dbReference>
<name>TPRT_ASFP4</name>
<keyword id="KW-1038">Host endoplasmic reticulum</keyword>
<keyword id="KW-1043">Host membrane</keyword>
<keyword id="KW-0414">Isoprene biosynthesis</keyword>
<keyword id="KW-0426">Late protein</keyword>
<keyword id="KW-0460">Magnesium</keyword>
<keyword id="KW-0472">Membrane</keyword>
<keyword id="KW-0479">Metal-binding</keyword>
<keyword id="KW-0808">Transferase</keyword>
<keyword id="KW-0812">Transmembrane</keyword>
<keyword id="KW-1133">Transmembrane helix</keyword>
<feature type="chain" id="PRO_0000373158" description="Trans-prenyltransferase">
    <location>
        <begin position="1"/>
        <end position="318"/>
    </location>
</feature>
<feature type="transmembrane region" description="Helical" evidence="4">
    <location>
        <begin position="1"/>
        <end position="21"/>
    </location>
</feature>
<feature type="binding site" evidence="2">
    <location>
        <position position="85"/>
    </location>
    <ligand>
        <name>isopentenyl diphosphate</name>
        <dbReference type="ChEBI" id="CHEBI:128769"/>
    </ligand>
</feature>
<feature type="binding site" evidence="2">
    <location>
        <position position="88"/>
    </location>
    <ligand>
        <name>isopentenyl diphosphate</name>
        <dbReference type="ChEBI" id="CHEBI:128769"/>
    </ligand>
</feature>
<feature type="binding site" evidence="3">
    <location>
        <position position="122"/>
    </location>
    <ligand>
        <name>isopentenyl diphosphate</name>
        <dbReference type="ChEBI" id="CHEBI:128769"/>
    </ligand>
</feature>
<feature type="binding site" evidence="2">
    <location>
        <position position="129"/>
    </location>
    <ligand>
        <name>Mg(2+)</name>
        <dbReference type="ChEBI" id="CHEBI:18420"/>
        <label>1</label>
    </ligand>
</feature>
<feature type="binding site" evidence="2">
    <location>
        <position position="129"/>
    </location>
    <ligand>
        <name>Mg(2+)</name>
        <dbReference type="ChEBI" id="CHEBI:18420"/>
        <label>2</label>
    </ligand>
</feature>
<feature type="binding site" evidence="2">
    <location>
        <position position="135"/>
    </location>
    <ligand>
        <name>Mg(2+)</name>
        <dbReference type="ChEBI" id="CHEBI:18420"/>
        <label>1</label>
    </ligand>
</feature>
<feature type="binding site" evidence="2">
    <location>
        <position position="135"/>
    </location>
    <ligand>
        <name>Mg(2+)</name>
        <dbReference type="ChEBI" id="CHEBI:18420"/>
        <label>2</label>
    </ligand>
</feature>
<feature type="binding site" evidence="1">
    <location>
        <position position="140"/>
    </location>
    <ligand>
        <name>dimethylallyl diphosphate</name>
        <dbReference type="ChEBI" id="CHEBI:57623"/>
    </ligand>
</feature>
<feature type="binding site" evidence="2">
    <location>
        <position position="141"/>
    </location>
    <ligand>
        <name>isopentenyl diphosphate</name>
        <dbReference type="ChEBI" id="CHEBI:128769"/>
    </ligand>
</feature>
<feature type="binding site" evidence="1">
    <location>
        <position position="216"/>
    </location>
    <ligand>
        <name>dimethylallyl diphosphate</name>
        <dbReference type="ChEBI" id="CHEBI:57623"/>
    </ligand>
</feature>
<feature type="binding site" evidence="1">
    <location>
        <position position="217"/>
    </location>
    <ligand>
        <name>dimethylallyl diphosphate</name>
        <dbReference type="ChEBI" id="CHEBI:57623"/>
    </ligand>
</feature>
<feature type="binding site" evidence="1">
    <location>
        <position position="254"/>
    </location>
    <ligand>
        <name>dimethylallyl diphosphate</name>
        <dbReference type="ChEBI" id="CHEBI:57623"/>
    </ligand>
</feature>
<organismHost>
    <name type="scientific">Ornithodoros</name>
    <name type="common">relapsing fever ticks</name>
    <dbReference type="NCBI Taxonomy" id="6937"/>
</organismHost>
<organismHost>
    <name type="scientific">Phacochoerus aethiopicus</name>
    <name type="common">Warthog</name>
    <dbReference type="NCBI Taxonomy" id="85517"/>
</organismHost>
<organismHost>
    <name type="scientific">Phacochoerus africanus</name>
    <name type="common">Warthog</name>
    <dbReference type="NCBI Taxonomy" id="41426"/>
</organismHost>
<organismHost>
    <name type="scientific">Potamochoerus larvatus</name>
    <name type="common">Bushpig</name>
    <dbReference type="NCBI Taxonomy" id="273792"/>
</organismHost>
<organismHost>
    <name type="scientific">Sus scrofa</name>
    <name type="common">Pig</name>
    <dbReference type="NCBI Taxonomy" id="9823"/>
</organismHost>
<sequence>MLHLIYISIIVVLIIILISYTRKPKYFRITAPRSVALFHGIHPLKPKNYKTFSEEFETILNNAIEDGDFKGQLTEPCSYALRGGKYIRPIILMEIVRACQLQHSFGAPIYPAEAALAVEYFHVASLIIDDMPSFDNDVKRRNKDTVWARFGVAKAQMSALALTMQGFQNICRQIDWIKEHCPRFPDPNQLGALLCTFVSHSLNSAGSGQLVDTPEKTIPFFKIAFIMGWVLGTGTIEDIGMIERAAHCFGNAFQLADDIKDHDTDTGWNYAKIHGKRKTFDDVAQSLQECKKILHGKKIYTSIWNEIFQKVINVALGT</sequence>
<evidence type="ECO:0000250" key="1"/>
<evidence type="ECO:0000250" key="2">
    <source>
        <dbReference type="UniProtKB" id="P14324"/>
    </source>
</evidence>
<evidence type="ECO:0000250" key="3">
    <source>
        <dbReference type="UniProtKB" id="Q12051"/>
    </source>
</evidence>
<evidence type="ECO:0000255" key="4"/>
<evidence type="ECO:0000305" key="5"/>